<reference key="1">
    <citation type="submission" date="2008-06" db="EMBL/GenBank/DDBJ databases">
        <title>Complete sequence of chromosome of Prosthecochloris aestuarii DSM 271.</title>
        <authorList>
            <consortium name="US DOE Joint Genome Institute"/>
            <person name="Lucas S."/>
            <person name="Copeland A."/>
            <person name="Lapidus A."/>
            <person name="Glavina del Rio T."/>
            <person name="Dalin E."/>
            <person name="Tice H."/>
            <person name="Bruce D."/>
            <person name="Goodwin L."/>
            <person name="Pitluck S."/>
            <person name="Schmutz J."/>
            <person name="Larimer F."/>
            <person name="Land M."/>
            <person name="Hauser L."/>
            <person name="Kyrpides N."/>
            <person name="Anderson I."/>
            <person name="Liu Z."/>
            <person name="Li T."/>
            <person name="Zhao F."/>
            <person name="Overmann J."/>
            <person name="Bryant D.A."/>
            <person name="Richardson P."/>
        </authorList>
    </citation>
    <scope>NUCLEOTIDE SEQUENCE [LARGE SCALE GENOMIC DNA]</scope>
    <source>
        <strain>DSM 271 / SK 413</strain>
    </source>
</reference>
<accession>B4S9B0</accession>
<protein>
    <recommendedName>
        <fullName evidence="1">Triosephosphate isomerase</fullName>
        <shortName evidence="1">TIM</shortName>
        <shortName evidence="1">TPI</shortName>
        <ecNumber evidence="1">5.3.1.1</ecNumber>
    </recommendedName>
    <alternativeName>
        <fullName evidence="1">Triose-phosphate isomerase</fullName>
    </alternativeName>
</protein>
<proteinExistence type="inferred from homology"/>
<dbReference type="EC" id="5.3.1.1" evidence="1"/>
<dbReference type="EMBL" id="CP001108">
    <property type="protein sequence ID" value="ACF46580.1"/>
    <property type="molecule type" value="Genomic_DNA"/>
</dbReference>
<dbReference type="RefSeq" id="WP_012506113.1">
    <property type="nucleotide sequence ID" value="NC_011059.1"/>
</dbReference>
<dbReference type="SMR" id="B4S9B0"/>
<dbReference type="STRING" id="290512.Paes_1562"/>
<dbReference type="KEGG" id="paa:Paes_1562"/>
<dbReference type="eggNOG" id="COG0149">
    <property type="taxonomic scope" value="Bacteria"/>
</dbReference>
<dbReference type="HOGENOM" id="CLU_024251_2_1_10"/>
<dbReference type="UniPathway" id="UPA00109">
    <property type="reaction ID" value="UER00189"/>
</dbReference>
<dbReference type="UniPathway" id="UPA00138"/>
<dbReference type="Proteomes" id="UP000002725">
    <property type="component" value="Chromosome"/>
</dbReference>
<dbReference type="GO" id="GO:0005829">
    <property type="term" value="C:cytosol"/>
    <property type="evidence" value="ECO:0007669"/>
    <property type="project" value="TreeGrafter"/>
</dbReference>
<dbReference type="GO" id="GO:0004807">
    <property type="term" value="F:triose-phosphate isomerase activity"/>
    <property type="evidence" value="ECO:0007669"/>
    <property type="project" value="UniProtKB-UniRule"/>
</dbReference>
<dbReference type="GO" id="GO:0006094">
    <property type="term" value="P:gluconeogenesis"/>
    <property type="evidence" value="ECO:0007669"/>
    <property type="project" value="UniProtKB-UniRule"/>
</dbReference>
<dbReference type="GO" id="GO:0046166">
    <property type="term" value="P:glyceraldehyde-3-phosphate biosynthetic process"/>
    <property type="evidence" value="ECO:0007669"/>
    <property type="project" value="TreeGrafter"/>
</dbReference>
<dbReference type="GO" id="GO:0019563">
    <property type="term" value="P:glycerol catabolic process"/>
    <property type="evidence" value="ECO:0007669"/>
    <property type="project" value="TreeGrafter"/>
</dbReference>
<dbReference type="GO" id="GO:0006096">
    <property type="term" value="P:glycolytic process"/>
    <property type="evidence" value="ECO:0007669"/>
    <property type="project" value="UniProtKB-UniRule"/>
</dbReference>
<dbReference type="CDD" id="cd00311">
    <property type="entry name" value="TIM"/>
    <property type="match status" value="1"/>
</dbReference>
<dbReference type="FunFam" id="3.20.20.70:FF:000016">
    <property type="entry name" value="Triosephosphate isomerase"/>
    <property type="match status" value="1"/>
</dbReference>
<dbReference type="Gene3D" id="3.20.20.70">
    <property type="entry name" value="Aldolase class I"/>
    <property type="match status" value="1"/>
</dbReference>
<dbReference type="HAMAP" id="MF_00147_B">
    <property type="entry name" value="TIM_B"/>
    <property type="match status" value="1"/>
</dbReference>
<dbReference type="InterPro" id="IPR013785">
    <property type="entry name" value="Aldolase_TIM"/>
</dbReference>
<dbReference type="InterPro" id="IPR035990">
    <property type="entry name" value="TIM_sf"/>
</dbReference>
<dbReference type="InterPro" id="IPR022896">
    <property type="entry name" value="TrioseP_Isoase_bac/euk"/>
</dbReference>
<dbReference type="InterPro" id="IPR000652">
    <property type="entry name" value="Triosephosphate_isomerase"/>
</dbReference>
<dbReference type="InterPro" id="IPR020861">
    <property type="entry name" value="Triosephosphate_isomerase_AS"/>
</dbReference>
<dbReference type="NCBIfam" id="TIGR00419">
    <property type="entry name" value="tim"/>
    <property type="match status" value="1"/>
</dbReference>
<dbReference type="PANTHER" id="PTHR21139">
    <property type="entry name" value="TRIOSEPHOSPHATE ISOMERASE"/>
    <property type="match status" value="1"/>
</dbReference>
<dbReference type="PANTHER" id="PTHR21139:SF42">
    <property type="entry name" value="TRIOSEPHOSPHATE ISOMERASE"/>
    <property type="match status" value="1"/>
</dbReference>
<dbReference type="Pfam" id="PF00121">
    <property type="entry name" value="TIM"/>
    <property type="match status" value="1"/>
</dbReference>
<dbReference type="SUPFAM" id="SSF51351">
    <property type="entry name" value="Triosephosphate isomerase (TIM)"/>
    <property type="match status" value="1"/>
</dbReference>
<dbReference type="PROSITE" id="PS00171">
    <property type="entry name" value="TIM_1"/>
    <property type="match status" value="1"/>
</dbReference>
<dbReference type="PROSITE" id="PS51440">
    <property type="entry name" value="TIM_2"/>
    <property type="match status" value="1"/>
</dbReference>
<sequence length="252" mass="26275">MRKKIVVGNWKMNKTIAEAVELSSAIIDQLGEVSASCEVGIAPAFPALSGVHGVISGTGIHLAAQNCHYEDDGAFTGEVSVRMLDEAGCSYVIVGHSERRQYFGDTNPVVNLKVKKALSAGLNVILCVGETLDEREKGITTEVVTCQVKEGLEGVADIGDIVIAYEPVWAIGTGKTASSLQAQEVHASIRATVAGLYSEPAAAGVRIQYGGSVKPSNAEELFAMPDIDGGLIGGASLNAEDFVAIVKAAEKS</sequence>
<comment type="function">
    <text evidence="1">Involved in the gluconeogenesis. Catalyzes stereospecifically the conversion of dihydroxyacetone phosphate (DHAP) to D-glyceraldehyde-3-phosphate (G3P).</text>
</comment>
<comment type="catalytic activity">
    <reaction evidence="1">
        <text>D-glyceraldehyde 3-phosphate = dihydroxyacetone phosphate</text>
        <dbReference type="Rhea" id="RHEA:18585"/>
        <dbReference type="ChEBI" id="CHEBI:57642"/>
        <dbReference type="ChEBI" id="CHEBI:59776"/>
        <dbReference type="EC" id="5.3.1.1"/>
    </reaction>
</comment>
<comment type="pathway">
    <text evidence="1">Carbohydrate biosynthesis; gluconeogenesis.</text>
</comment>
<comment type="pathway">
    <text evidence="1">Carbohydrate degradation; glycolysis; D-glyceraldehyde 3-phosphate from glycerone phosphate: step 1/1.</text>
</comment>
<comment type="subunit">
    <text evidence="1">Homodimer.</text>
</comment>
<comment type="subcellular location">
    <subcellularLocation>
        <location evidence="1">Cytoplasm</location>
    </subcellularLocation>
</comment>
<comment type="similarity">
    <text evidence="1">Belongs to the triosephosphate isomerase family.</text>
</comment>
<name>TPIS_PROA2</name>
<evidence type="ECO:0000255" key="1">
    <source>
        <dbReference type="HAMAP-Rule" id="MF_00147"/>
    </source>
</evidence>
<keyword id="KW-0963">Cytoplasm</keyword>
<keyword id="KW-0312">Gluconeogenesis</keyword>
<keyword id="KW-0324">Glycolysis</keyword>
<keyword id="KW-0413">Isomerase</keyword>
<gene>
    <name evidence="1" type="primary">tpiA</name>
    <name type="ordered locus">Paes_1562</name>
</gene>
<feature type="chain" id="PRO_1000096521" description="Triosephosphate isomerase">
    <location>
        <begin position="1"/>
        <end position="252"/>
    </location>
</feature>
<feature type="active site" description="Electrophile" evidence="1">
    <location>
        <position position="96"/>
    </location>
</feature>
<feature type="active site" description="Proton acceptor" evidence="1">
    <location>
        <position position="166"/>
    </location>
</feature>
<feature type="binding site" evidence="1">
    <location>
        <begin position="9"/>
        <end position="11"/>
    </location>
    <ligand>
        <name>substrate</name>
    </ligand>
</feature>
<feature type="binding site" evidence="1">
    <location>
        <position position="172"/>
    </location>
    <ligand>
        <name>substrate</name>
    </ligand>
</feature>
<feature type="binding site" evidence="1">
    <location>
        <position position="212"/>
    </location>
    <ligand>
        <name>substrate</name>
    </ligand>
</feature>
<feature type="binding site" evidence="1">
    <location>
        <begin position="233"/>
        <end position="234"/>
    </location>
    <ligand>
        <name>substrate</name>
    </ligand>
</feature>
<organism>
    <name type="scientific">Prosthecochloris aestuarii (strain DSM 271 / SK 413)</name>
    <dbReference type="NCBI Taxonomy" id="290512"/>
    <lineage>
        <taxon>Bacteria</taxon>
        <taxon>Pseudomonadati</taxon>
        <taxon>Chlorobiota</taxon>
        <taxon>Chlorobiia</taxon>
        <taxon>Chlorobiales</taxon>
        <taxon>Chlorobiaceae</taxon>
        <taxon>Prosthecochloris</taxon>
    </lineage>
</organism>